<name>CLSA_BACSU</name>
<gene>
    <name type="primary">clsA</name>
    <name type="synonym">ywnE</name>
    <name type="ordered locus">BSU36590</name>
</gene>
<proteinExistence type="evidence at protein level"/>
<accession>P71040</accession>
<comment type="function">
    <text evidence="1 2">Catalyzes the reversible phosphatidyl group transfer from one phosphatidylglycerol molecule to another to form cardiolipin (CL) (diphosphatidylglycerol) and glycerol.</text>
</comment>
<comment type="catalytic activity">
    <reaction evidence="1">
        <text>2 a 1,2-diacyl-sn-glycero-3-phospho-(1'-sn-glycerol) = a cardiolipin + glycerol</text>
        <dbReference type="Rhea" id="RHEA:31451"/>
        <dbReference type="ChEBI" id="CHEBI:17754"/>
        <dbReference type="ChEBI" id="CHEBI:62237"/>
        <dbReference type="ChEBI" id="CHEBI:64716"/>
    </reaction>
</comment>
<comment type="subcellular location">
    <subcellularLocation>
        <location evidence="4">Cell membrane</location>
        <topology evidence="4">Multi-pass membrane protein</topology>
    </subcellularLocation>
    <text>Localized in the septal membrane. Localization depnds on FtsZ.</text>
</comment>
<comment type="disruption phenotype">
    <text evidence="2 3">Cells lacking this gene show a lack of cardiolipin (PubMed:14973018). Cells appear normal, no effect on flotillin cluster numbers or size (PubMed:27362352).</text>
</comment>
<comment type="similarity">
    <text evidence="1">Belongs to the phospholipase D family. Cardiolipin synthase subfamily.</text>
</comment>
<organism>
    <name type="scientific">Bacillus subtilis (strain 168)</name>
    <dbReference type="NCBI Taxonomy" id="224308"/>
    <lineage>
        <taxon>Bacteria</taxon>
        <taxon>Bacillati</taxon>
        <taxon>Bacillota</taxon>
        <taxon>Bacilli</taxon>
        <taxon>Bacillales</taxon>
        <taxon>Bacillaceae</taxon>
        <taxon>Bacillus</taxon>
    </lineage>
</organism>
<feature type="chain" id="PRO_0000201248" description="Major cardiolipin synthase ClsA">
    <location>
        <begin position="1"/>
        <end position="482"/>
    </location>
</feature>
<feature type="transmembrane region" description="Helical" evidence="1">
    <location>
        <begin position="3"/>
        <end position="23"/>
    </location>
</feature>
<feature type="transmembrane region" description="Helical" evidence="1">
    <location>
        <begin position="34"/>
        <end position="54"/>
    </location>
</feature>
<feature type="domain" description="PLD phosphodiesterase 1" evidence="1">
    <location>
        <begin position="217"/>
        <end position="244"/>
    </location>
</feature>
<feature type="domain" description="PLD phosphodiesterase 2" evidence="1">
    <location>
        <begin position="395"/>
        <end position="422"/>
    </location>
</feature>
<feature type="active site" evidence="1">
    <location>
        <position position="222"/>
    </location>
</feature>
<feature type="active site" evidence="1">
    <location>
        <position position="224"/>
    </location>
</feature>
<feature type="active site" evidence="1">
    <location>
        <position position="229"/>
    </location>
</feature>
<feature type="active site" evidence="1">
    <location>
        <position position="400"/>
    </location>
</feature>
<feature type="active site" evidence="1">
    <location>
        <position position="402"/>
    </location>
</feature>
<feature type="active site" evidence="1">
    <location>
        <position position="407"/>
    </location>
</feature>
<sequence length="482" mass="55866">MSISSILLSLFFILNILLAIIVIFKERRDASASWAWLLVLFFIPVLGFILYLLFGHNLRRKHLFQWEDRKKIGIERLLKHQLEDLETKQFQFNNRATFDNKDLIYMLIMNNHAVFTEDNSVDVITDGRDKFQRLLSDISKAKDHIHLQYYIYKGDELGKKLRDALIQKAKEGVQVRVLYDELGSRTLRKKFFKELREAGGHVEVFFPSKLRPINLRLNYRNHRKLVIIDGMTGYVGGFNVGDEYLGLNPKFGYWRDTHIRLQGTAVHAIQTRFILDWNQASHHHTLTYIPNHFPDYGPKGNVGMQIVTSGPDSEWEQIKNGYIKMISNAKRSILIQTPYFIPDASLLDALRIACLSGIDVNIMIPNKPDHAFVYWATLSYIGDLLKAGATVYIYDNGFIHAKTIVVDDEIASVGTANIDVRSFRLNFEVNAFIYDITIAKKLVSTFKEDLLVSRKFTYEEYLQRPLWIRIKESVSRLLSPIL</sequence>
<evidence type="ECO:0000255" key="1">
    <source>
        <dbReference type="HAMAP-Rule" id="MF_01916"/>
    </source>
</evidence>
<evidence type="ECO:0000269" key="2">
    <source>
    </source>
</evidence>
<evidence type="ECO:0000269" key="3">
    <source>
    </source>
</evidence>
<evidence type="ECO:0000305" key="4">
    <source>
    </source>
</evidence>
<dbReference type="EC" id="2.7.8.-" evidence="1"/>
<dbReference type="EMBL" id="Y08559">
    <property type="protein sequence ID" value="CAA69864.1"/>
    <property type="molecule type" value="Genomic_DNA"/>
</dbReference>
<dbReference type="EMBL" id="AL009126">
    <property type="protein sequence ID" value="CAB15676.1"/>
    <property type="molecule type" value="Genomic_DNA"/>
</dbReference>
<dbReference type="PIR" id="G70063">
    <property type="entry name" value="G70063"/>
</dbReference>
<dbReference type="RefSeq" id="NP_391540.1">
    <property type="nucleotide sequence ID" value="NC_000964.3"/>
</dbReference>
<dbReference type="SMR" id="P71040"/>
<dbReference type="FunCoup" id="P71040">
    <property type="interactions" value="209"/>
</dbReference>
<dbReference type="STRING" id="224308.BSU36590"/>
<dbReference type="PaxDb" id="224308-BSU36590"/>
<dbReference type="DNASU" id="936957"/>
<dbReference type="EnsemblBacteria" id="CAB15676">
    <property type="protein sequence ID" value="CAB15676"/>
    <property type="gene ID" value="BSU_36590"/>
</dbReference>
<dbReference type="GeneID" id="936957"/>
<dbReference type="KEGG" id="bsu:BSU36590"/>
<dbReference type="PATRIC" id="fig|224308.179.peg.3960"/>
<dbReference type="eggNOG" id="COG1502">
    <property type="taxonomic scope" value="Bacteria"/>
</dbReference>
<dbReference type="InParanoid" id="P71040"/>
<dbReference type="OrthoDB" id="9762009at2"/>
<dbReference type="PhylomeDB" id="P71040"/>
<dbReference type="BioCyc" id="BSUB:BSU36590-MONOMER"/>
<dbReference type="BRENDA" id="2.7.8.41">
    <property type="organism ID" value="658"/>
</dbReference>
<dbReference type="Proteomes" id="UP000001570">
    <property type="component" value="Chromosome"/>
</dbReference>
<dbReference type="GO" id="GO:0005886">
    <property type="term" value="C:plasma membrane"/>
    <property type="evidence" value="ECO:0007669"/>
    <property type="project" value="UniProtKB-SubCell"/>
</dbReference>
<dbReference type="GO" id="GO:0008808">
    <property type="term" value="F:cardiolipin synthase activity"/>
    <property type="evidence" value="ECO:0000315"/>
    <property type="project" value="UniProtKB"/>
</dbReference>
<dbReference type="GO" id="GO:0032049">
    <property type="term" value="P:cardiolipin biosynthetic process"/>
    <property type="evidence" value="ECO:0000315"/>
    <property type="project" value="UniProtKB"/>
</dbReference>
<dbReference type="GO" id="GO:0043934">
    <property type="term" value="P:sporulation"/>
    <property type="evidence" value="ECO:0000315"/>
    <property type="project" value="UniProtKB"/>
</dbReference>
<dbReference type="GO" id="GO:0055085">
    <property type="term" value="P:transmembrane transport"/>
    <property type="evidence" value="ECO:0007669"/>
    <property type="project" value="InterPro"/>
</dbReference>
<dbReference type="CDD" id="cd09110">
    <property type="entry name" value="PLDc_CLS_1"/>
    <property type="match status" value="1"/>
</dbReference>
<dbReference type="CDD" id="cd09112">
    <property type="entry name" value="PLDc_CLS_2"/>
    <property type="match status" value="1"/>
</dbReference>
<dbReference type="CDD" id="cd06261">
    <property type="entry name" value="TM_PBP2"/>
    <property type="match status" value="1"/>
</dbReference>
<dbReference type="FunFam" id="3.30.870.10:FF:000014">
    <property type="entry name" value="Cardiolipin synthase"/>
    <property type="match status" value="1"/>
</dbReference>
<dbReference type="FunFam" id="3.30.870.10:FF:000021">
    <property type="entry name" value="Cardiolipin synthase"/>
    <property type="match status" value="1"/>
</dbReference>
<dbReference type="Gene3D" id="3.30.870.10">
    <property type="entry name" value="Endonuclease Chain A"/>
    <property type="match status" value="2"/>
</dbReference>
<dbReference type="HAMAP" id="MF_01916">
    <property type="entry name" value="Cardiolipin_synth_Cls"/>
    <property type="match status" value="1"/>
</dbReference>
<dbReference type="InterPro" id="IPR030874">
    <property type="entry name" value="Cardiolipin_synth_Firmi"/>
</dbReference>
<dbReference type="InterPro" id="IPR022924">
    <property type="entry name" value="Cardiolipin_synthase"/>
</dbReference>
<dbReference type="InterPro" id="IPR027379">
    <property type="entry name" value="CLS_N"/>
</dbReference>
<dbReference type="InterPro" id="IPR000515">
    <property type="entry name" value="MetI-like"/>
</dbReference>
<dbReference type="InterPro" id="IPR025202">
    <property type="entry name" value="PLD-like_dom"/>
</dbReference>
<dbReference type="InterPro" id="IPR001736">
    <property type="entry name" value="PLipase_D/transphosphatidylase"/>
</dbReference>
<dbReference type="NCBIfam" id="TIGR04265">
    <property type="entry name" value="bac_cardiolipin"/>
    <property type="match status" value="1"/>
</dbReference>
<dbReference type="PANTHER" id="PTHR21248">
    <property type="entry name" value="CARDIOLIPIN SYNTHASE"/>
    <property type="match status" value="1"/>
</dbReference>
<dbReference type="PANTHER" id="PTHR21248:SF22">
    <property type="entry name" value="PHOSPHOLIPASE D"/>
    <property type="match status" value="1"/>
</dbReference>
<dbReference type="Pfam" id="PF13091">
    <property type="entry name" value="PLDc_2"/>
    <property type="match status" value="2"/>
</dbReference>
<dbReference type="Pfam" id="PF13396">
    <property type="entry name" value="PLDc_N"/>
    <property type="match status" value="1"/>
</dbReference>
<dbReference type="SMART" id="SM00155">
    <property type="entry name" value="PLDc"/>
    <property type="match status" value="2"/>
</dbReference>
<dbReference type="SUPFAM" id="SSF56024">
    <property type="entry name" value="Phospholipase D/nuclease"/>
    <property type="match status" value="2"/>
</dbReference>
<dbReference type="PROSITE" id="PS50035">
    <property type="entry name" value="PLD"/>
    <property type="match status" value="2"/>
</dbReference>
<keyword id="KW-1003">Cell membrane</keyword>
<keyword id="KW-0444">Lipid biosynthesis</keyword>
<keyword id="KW-0443">Lipid metabolism</keyword>
<keyword id="KW-0472">Membrane</keyword>
<keyword id="KW-0594">Phospholipid biosynthesis</keyword>
<keyword id="KW-1208">Phospholipid metabolism</keyword>
<keyword id="KW-1185">Reference proteome</keyword>
<keyword id="KW-0677">Repeat</keyword>
<keyword id="KW-0808">Transferase</keyword>
<keyword id="KW-0812">Transmembrane</keyword>
<keyword id="KW-1133">Transmembrane helix</keyword>
<protein>
    <recommendedName>
        <fullName>Major cardiolipin synthase ClsA</fullName>
        <shortName evidence="1">CL synthase 2</shortName>
        <ecNumber evidence="1">2.7.8.-</ecNumber>
    </recommendedName>
</protein>
<reference key="1">
    <citation type="journal article" date="1997" name="J. Bacteriol.">
        <title>The Bacillus subtilis ureABC operon.</title>
        <authorList>
            <person name="Cruz-Ramos H."/>
            <person name="Glaser P."/>
            <person name="Wray L.V. Jr."/>
            <person name="Fisher S.H."/>
        </authorList>
    </citation>
    <scope>NUCLEOTIDE SEQUENCE [GENOMIC DNA]</scope>
    <source>
        <strain>168</strain>
    </source>
</reference>
<reference key="2">
    <citation type="journal article" date="1997" name="Nature">
        <title>The complete genome sequence of the Gram-positive bacterium Bacillus subtilis.</title>
        <authorList>
            <person name="Kunst F."/>
            <person name="Ogasawara N."/>
            <person name="Moszer I."/>
            <person name="Albertini A.M."/>
            <person name="Alloni G."/>
            <person name="Azevedo V."/>
            <person name="Bertero M.G."/>
            <person name="Bessieres P."/>
            <person name="Bolotin A."/>
            <person name="Borchert S."/>
            <person name="Borriss R."/>
            <person name="Boursier L."/>
            <person name="Brans A."/>
            <person name="Braun M."/>
            <person name="Brignell S.C."/>
            <person name="Bron S."/>
            <person name="Brouillet S."/>
            <person name="Bruschi C.V."/>
            <person name="Caldwell B."/>
            <person name="Capuano V."/>
            <person name="Carter N.M."/>
            <person name="Choi S.-K."/>
            <person name="Codani J.-J."/>
            <person name="Connerton I.F."/>
            <person name="Cummings N.J."/>
            <person name="Daniel R.A."/>
            <person name="Denizot F."/>
            <person name="Devine K.M."/>
            <person name="Duesterhoeft A."/>
            <person name="Ehrlich S.D."/>
            <person name="Emmerson P.T."/>
            <person name="Entian K.-D."/>
            <person name="Errington J."/>
            <person name="Fabret C."/>
            <person name="Ferrari E."/>
            <person name="Foulger D."/>
            <person name="Fritz C."/>
            <person name="Fujita M."/>
            <person name="Fujita Y."/>
            <person name="Fuma S."/>
            <person name="Galizzi A."/>
            <person name="Galleron N."/>
            <person name="Ghim S.-Y."/>
            <person name="Glaser P."/>
            <person name="Goffeau A."/>
            <person name="Golightly E.J."/>
            <person name="Grandi G."/>
            <person name="Guiseppi G."/>
            <person name="Guy B.J."/>
            <person name="Haga K."/>
            <person name="Haiech J."/>
            <person name="Harwood C.R."/>
            <person name="Henaut A."/>
            <person name="Hilbert H."/>
            <person name="Holsappel S."/>
            <person name="Hosono S."/>
            <person name="Hullo M.-F."/>
            <person name="Itaya M."/>
            <person name="Jones L.-M."/>
            <person name="Joris B."/>
            <person name="Karamata D."/>
            <person name="Kasahara Y."/>
            <person name="Klaerr-Blanchard M."/>
            <person name="Klein C."/>
            <person name="Kobayashi Y."/>
            <person name="Koetter P."/>
            <person name="Koningstein G."/>
            <person name="Krogh S."/>
            <person name="Kumano M."/>
            <person name="Kurita K."/>
            <person name="Lapidus A."/>
            <person name="Lardinois S."/>
            <person name="Lauber J."/>
            <person name="Lazarevic V."/>
            <person name="Lee S.-M."/>
            <person name="Levine A."/>
            <person name="Liu H."/>
            <person name="Masuda S."/>
            <person name="Mauel C."/>
            <person name="Medigue C."/>
            <person name="Medina N."/>
            <person name="Mellado R.P."/>
            <person name="Mizuno M."/>
            <person name="Moestl D."/>
            <person name="Nakai S."/>
            <person name="Noback M."/>
            <person name="Noone D."/>
            <person name="O'Reilly M."/>
            <person name="Ogawa K."/>
            <person name="Ogiwara A."/>
            <person name="Oudega B."/>
            <person name="Park S.-H."/>
            <person name="Parro V."/>
            <person name="Pohl T.M."/>
            <person name="Portetelle D."/>
            <person name="Porwollik S."/>
            <person name="Prescott A.M."/>
            <person name="Presecan E."/>
            <person name="Pujic P."/>
            <person name="Purnelle B."/>
            <person name="Rapoport G."/>
            <person name="Rey M."/>
            <person name="Reynolds S."/>
            <person name="Rieger M."/>
            <person name="Rivolta C."/>
            <person name="Rocha E."/>
            <person name="Roche B."/>
            <person name="Rose M."/>
            <person name="Sadaie Y."/>
            <person name="Sato T."/>
            <person name="Scanlan E."/>
            <person name="Schleich S."/>
            <person name="Schroeter R."/>
            <person name="Scoffone F."/>
            <person name="Sekiguchi J."/>
            <person name="Sekowska A."/>
            <person name="Seror S.J."/>
            <person name="Serror P."/>
            <person name="Shin B.-S."/>
            <person name="Soldo B."/>
            <person name="Sorokin A."/>
            <person name="Tacconi E."/>
            <person name="Takagi T."/>
            <person name="Takahashi H."/>
            <person name="Takemaru K."/>
            <person name="Takeuchi M."/>
            <person name="Tamakoshi A."/>
            <person name="Tanaka T."/>
            <person name="Terpstra P."/>
            <person name="Tognoni A."/>
            <person name="Tosato V."/>
            <person name="Uchiyama S."/>
            <person name="Vandenbol M."/>
            <person name="Vannier F."/>
            <person name="Vassarotti A."/>
            <person name="Viari A."/>
            <person name="Wambutt R."/>
            <person name="Wedler E."/>
            <person name="Wedler H."/>
            <person name="Weitzenegger T."/>
            <person name="Winters P."/>
            <person name="Wipat A."/>
            <person name="Yamamoto H."/>
            <person name="Yamane K."/>
            <person name="Yasumoto K."/>
            <person name="Yata K."/>
            <person name="Yoshida K."/>
            <person name="Yoshikawa H.-F."/>
            <person name="Zumstein E."/>
            <person name="Yoshikawa H."/>
            <person name="Danchin A."/>
        </authorList>
    </citation>
    <scope>NUCLEOTIDE SEQUENCE [LARGE SCALE GENOMIC DNA]</scope>
    <source>
        <strain>168</strain>
    </source>
</reference>
<reference key="3">
    <citation type="journal article" date="2004" name="J. Bacteriol.">
        <title>Cardiolipin domains in Bacillus subtilis marburg membranes.</title>
        <authorList>
            <person name="Kawai F."/>
            <person name="Shoda M."/>
            <person name="Harashima R."/>
            <person name="Sadaie Y."/>
            <person name="Hara H."/>
            <person name="Matsumoto K."/>
        </authorList>
    </citation>
    <scope>FUNCTION IN THE CARDIOLIPIN BIOSYNTHESIS</scope>
    <scope>DISRUPTION PHENOTYPE</scope>
    <scope>NOMENCLATURE</scope>
</reference>
<reference key="4">
    <citation type="journal article" date="2005" name="J. Bacteriol.">
        <title>Phosphatidylethanolamine domains and localization of phospholipid synthases in Bacillus subtilis membranes.</title>
        <authorList>
            <person name="Nishibori A."/>
            <person name="Kusaka J."/>
            <person name="Hara H."/>
            <person name="Umeda M."/>
            <person name="Matsumoto K."/>
        </authorList>
    </citation>
    <scope>SUBCELLULAR LOCATION</scope>
</reference>
<reference key="5">
    <citation type="journal article" date="2016" name="PLoS Genet.">
        <title>Super Resolution Fluorescence Microscopy and Tracking of Bacterial Flotillin (Reggie) Paralogs Provide Evidence for Defined-Sized Protein Microdomains within the Bacterial Membrane but Absence of Clusters Containing Detergent-Resistant Proteins.</title>
        <authorList>
            <person name="Dempwolff F."/>
            <person name="Schmidt F.K."/>
            <person name="Hervas A.B."/>
            <person name="Stroh A."/>
            <person name="Roesch T.C."/>
            <person name="Riese C.N."/>
            <person name="Dersch S."/>
            <person name="Heimerl T."/>
            <person name="Lucena D."/>
            <person name="Huelsbusch N."/>
            <person name="Stuermer C.A."/>
            <person name="Takeshita N."/>
            <person name="Fischer R."/>
            <person name="Eckhardt B."/>
            <person name="Graumann P.L."/>
        </authorList>
    </citation>
    <scope>DISRUPTION PHENOTYPE</scope>
    <source>
        <strain>168</strain>
    </source>
</reference>